<evidence type="ECO:0000250" key="1"/>
<evidence type="ECO:0000255" key="2">
    <source>
        <dbReference type="HAMAP-Rule" id="MF_00403"/>
    </source>
</evidence>
<evidence type="ECO:0000256" key="3">
    <source>
        <dbReference type="SAM" id="MobiDB-lite"/>
    </source>
</evidence>
<evidence type="ECO:0000305" key="4"/>
<protein>
    <recommendedName>
        <fullName evidence="2">Small ribosomal subunit protein uS12</fullName>
    </recommendedName>
    <alternativeName>
        <fullName evidence="4">30S ribosomal protein S12</fullName>
    </alternativeName>
</protein>
<comment type="function">
    <text evidence="2">With S4 and S5 plays an important role in translational accuracy.</text>
</comment>
<comment type="function">
    <text evidence="2">Interacts with and stabilizes bases of the 16S rRNA that are involved in tRNA selection in the A site and with the mRNA backbone. Located at the interface of the 30S and 50S subunits, it traverses the body of the 30S subunit contacting proteins on the other side and probably holding the rRNA structure together. The combined cluster of proteins S8, S12 and S17 appears to hold together the shoulder and platform of the 30S subunit.</text>
</comment>
<comment type="subunit">
    <text evidence="2">Part of the 30S ribosomal subunit. Contacts proteins S8 and S17. May interact with IF1 in the 30S initiation complex.</text>
</comment>
<comment type="similarity">
    <text evidence="2">Belongs to the universal ribosomal protein uS12 family.</text>
</comment>
<proteinExistence type="inferred from homology"/>
<accession>B3E073</accession>
<reference key="1">
    <citation type="journal article" date="2008" name="Biol. Direct">
        <title>Complete genome sequence of the extremely acidophilic methanotroph isolate V4, Methylacidiphilum infernorum, a representative of the bacterial phylum Verrucomicrobia.</title>
        <authorList>
            <person name="Hou S."/>
            <person name="Makarova K.S."/>
            <person name="Saw J.H."/>
            <person name="Senin P."/>
            <person name="Ly B.V."/>
            <person name="Zhou Z."/>
            <person name="Ren Y."/>
            <person name="Wang J."/>
            <person name="Galperin M.Y."/>
            <person name="Omelchenko M.V."/>
            <person name="Wolf Y.I."/>
            <person name="Yutin N."/>
            <person name="Koonin E.V."/>
            <person name="Stott M.B."/>
            <person name="Mountain B.W."/>
            <person name="Crowe M.A."/>
            <person name="Smirnova A.V."/>
            <person name="Dunfield P.F."/>
            <person name="Feng L."/>
            <person name="Wang L."/>
            <person name="Alam M."/>
        </authorList>
    </citation>
    <scope>NUCLEOTIDE SEQUENCE [LARGE SCALE GENOMIC DNA]</scope>
    <source>
        <strain>Isolate V4</strain>
    </source>
</reference>
<keyword id="KW-0488">Methylation</keyword>
<keyword id="KW-0687">Ribonucleoprotein</keyword>
<keyword id="KW-0689">Ribosomal protein</keyword>
<keyword id="KW-0694">RNA-binding</keyword>
<keyword id="KW-0699">rRNA-binding</keyword>
<keyword id="KW-0820">tRNA-binding</keyword>
<gene>
    <name evidence="2" type="primary">rpsL</name>
    <name type="ordered locus">Minf_0679</name>
</gene>
<feature type="chain" id="PRO_1000194189" description="Small ribosomal subunit protein uS12">
    <location>
        <begin position="1"/>
        <end position="141"/>
    </location>
</feature>
<feature type="region of interest" description="Disordered" evidence="3">
    <location>
        <begin position="104"/>
        <end position="141"/>
    </location>
</feature>
<feature type="compositionally biased region" description="Polar residues" evidence="3">
    <location>
        <begin position="110"/>
        <end position="122"/>
    </location>
</feature>
<feature type="compositionally biased region" description="Basic residues" evidence="3">
    <location>
        <begin position="125"/>
        <end position="141"/>
    </location>
</feature>
<feature type="modified residue" description="3-methylthioaspartic acid" evidence="1">
    <location>
        <position position="89"/>
    </location>
</feature>
<organism>
    <name type="scientific">Methylacidiphilum infernorum (isolate V4)</name>
    <name type="common">Methylokorus infernorum (strain V4)</name>
    <dbReference type="NCBI Taxonomy" id="481448"/>
    <lineage>
        <taxon>Bacteria</taxon>
        <taxon>Pseudomonadati</taxon>
        <taxon>Verrucomicrobiota</taxon>
        <taxon>Methylacidiphilae</taxon>
        <taxon>Methylacidiphilales</taxon>
        <taxon>Methylacidiphilaceae</taxon>
        <taxon>Methylacidiphilum (ex Ratnadevi et al. 2023)</taxon>
    </lineage>
</organism>
<dbReference type="EMBL" id="CP000975">
    <property type="protein sequence ID" value="ACD82734.1"/>
    <property type="molecule type" value="Genomic_DNA"/>
</dbReference>
<dbReference type="RefSeq" id="WP_012463016.1">
    <property type="nucleotide sequence ID" value="NC_010794.1"/>
</dbReference>
<dbReference type="SMR" id="B3E073"/>
<dbReference type="STRING" id="481448.Minf_0679"/>
<dbReference type="KEGG" id="min:Minf_0679"/>
<dbReference type="eggNOG" id="COG0048">
    <property type="taxonomic scope" value="Bacteria"/>
</dbReference>
<dbReference type="HOGENOM" id="CLU_104295_1_2_0"/>
<dbReference type="OrthoDB" id="9802366at2"/>
<dbReference type="Proteomes" id="UP000009149">
    <property type="component" value="Chromosome"/>
</dbReference>
<dbReference type="GO" id="GO:0015935">
    <property type="term" value="C:small ribosomal subunit"/>
    <property type="evidence" value="ECO:0007669"/>
    <property type="project" value="InterPro"/>
</dbReference>
<dbReference type="GO" id="GO:0019843">
    <property type="term" value="F:rRNA binding"/>
    <property type="evidence" value="ECO:0007669"/>
    <property type="project" value="UniProtKB-UniRule"/>
</dbReference>
<dbReference type="GO" id="GO:0003735">
    <property type="term" value="F:structural constituent of ribosome"/>
    <property type="evidence" value="ECO:0007669"/>
    <property type="project" value="InterPro"/>
</dbReference>
<dbReference type="GO" id="GO:0000049">
    <property type="term" value="F:tRNA binding"/>
    <property type="evidence" value="ECO:0007669"/>
    <property type="project" value="UniProtKB-UniRule"/>
</dbReference>
<dbReference type="GO" id="GO:0006412">
    <property type="term" value="P:translation"/>
    <property type="evidence" value="ECO:0007669"/>
    <property type="project" value="UniProtKB-UniRule"/>
</dbReference>
<dbReference type="CDD" id="cd03368">
    <property type="entry name" value="Ribosomal_S12"/>
    <property type="match status" value="1"/>
</dbReference>
<dbReference type="FunFam" id="2.40.50.140:FF:000001">
    <property type="entry name" value="30S ribosomal protein S12"/>
    <property type="match status" value="1"/>
</dbReference>
<dbReference type="Gene3D" id="2.40.50.140">
    <property type="entry name" value="Nucleic acid-binding proteins"/>
    <property type="match status" value="1"/>
</dbReference>
<dbReference type="HAMAP" id="MF_00403_B">
    <property type="entry name" value="Ribosomal_uS12_B"/>
    <property type="match status" value="1"/>
</dbReference>
<dbReference type="InterPro" id="IPR012340">
    <property type="entry name" value="NA-bd_OB-fold"/>
</dbReference>
<dbReference type="InterPro" id="IPR006032">
    <property type="entry name" value="Ribosomal_uS12"/>
</dbReference>
<dbReference type="InterPro" id="IPR005679">
    <property type="entry name" value="Ribosomal_uS12_bac"/>
</dbReference>
<dbReference type="NCBIfam" id="TIGR00981">
    <property type="entry name" value="rpsL_bact"/>
    <property type="match status" value="1"/>
</dbReference>
<dbReference type="PANTHER" id="PTHR11652">
    <property type="entry name" value="30S RIBOSOMAL PROTEIN S12 FAMILY MEMBER"/>
    <property type="match status" value="1"/>
</dbReference>
<dbReference type="Pfam" id="PF00164">
    <property type="entry name" value="Ribosom_S12_S23"/>
    <property type="match status" value="1"/>
</dbReference>
<dbReference type="PIRSF" id="PIRSF002133">
    <property type="entry name" value="Ribosomal_S12/S23"/>
    <property type="match status" value="1"/>
</dbReference>
<dbReference type="PRINTS" id="PR01034">
    <property type="entry name" value="RIBOSOMALS12"/>
</dbReference>
<dbReference type="SUPFAM" id="SSF50249">
    <property type="entry name" value="Nucleic acid-binding proteins"/>
    <property type="match status" value="1"/>
</dbReference>
<dbReference type="PROSITE" id="PS00055">
    <property type="entry name" value="RIBOSOMAL_S12"/>
    <property type="match status" value="1"/>
</dbReference>
<sequence>MPTINQLVRRGREKLKRKTKAPALDSCPQRRGVCVQVMTRTPKKPNSALRKVAKVRLTNGKEVIAYIPGEGHNLQEHSIVLVRGGRVKDLPGVRYHIIRGTLDASGAVGPSNTNKLNRNVSRSKYGVKRPKAGAKPASKAK</sequence>
<name>RS12_METI4</name>